<gene>
    <name type="primary">SLC11A1</name>
    <name type="synonym">NRAMP1</name>
</gene>
<protein>
    <recommendedName>
        <fullName>Natural resistance-associated macrophage protein 1</fullName>
        <shortName>NRAMP 1</shortName>
    </recommendedName>
    <alternativeName>
        <fullName>Solute carrier family 11 member 1</fullName>
    </alternativeName>
</protein>
<reference key="1">
    <citation type="journal article" date="1998" name="Anim. Genet.">
        <title>Cloning, sequencing and linkage mapping of the NRAMP1 gene of sheep and deer.</title>
        <authorList>
            <person name="Matthews G.D."/>
            <person name="Crawford A.M."/>
        </authorList>
    </citation>
    <scope>NUCLEOTIDE SEQUENCE [MRNA]</scope>
</reference>
<reference key="2">
    <citation type="journal article" date="1998" name="Mamm. Genome">
        <title>cDNA cloning, structural organization, and expression of the sheep NRAMP1 gene.</title>
        <authorList>
            <person name="Bussmann V."/>
            <person name="Lantier I."/>
            <person name="Pitel F."/>
            <person name="Patri S."/>
            <person name="Nau F."/>
            <person name="Gros P."/>
            <person name="Elsen J.M."/>
            <person name="Lantier F."/>
        </authorList>
    </citation>
    <scope>NUCLEOTIDE SEQUENCE [MRNA]</scope>
</reference>
<reference key="3">
    <citation type="journal article" date="1994" name="Mamm. Genome">
        <title>Cloning, sequencing, and localization of an ovine fragment of the NRAMP gene, a candidate for the ITY/LSH/BCG gene.</title>
        <authorList>
            <person name="Pitel F."/>
            <person name="Lantier I."/>
            <person name="Riquet J."/>
            <person name="Lanneluc I."/>
            <person name="Tabet-Aoul K."/>
            <person name="Saidi-Mehtar N."/>
            <person name="Lantier F."/>
            <person name="Gellin J."/>
        </authorList>
    </citation>
    <scope>NUCLEOTIDE SEQUENCE [GENOMIC DNA] OF 89-208</scope>
</reference>
<accession>P49280</accession>
<accession>O19035</accession>
<accession>Q9TSE9</accession>
<feature type="chain" id="PRO_0000212592" description="Natural resistance-associated macrophage protein 1">
    <location>
        <begin position="1"/>
        <end position="548"/>
    </location>
</feature>
<feature type="topological domain" description="Cytoplasmic" evidence="2">
    <location>
        <begin position="1"/>
        <end position="55"/>
    </location>
</feature>
<feature type="transmembrane region" description="Helical" evidence="2">
    <location>
        <begin position="56"/>
        <end position="73"/>
    </location>
</feature>
<feature type="topological domain" description="Extracellular" evidence="2">
    <location>
        <begin position="74"/>
        <end position="82"/>
    </location>
</feature>
<feature type="transmembrane region" description="Helical" evidence="2">
    <location>
        <begin position="83"/>
        <end position="102"/>
    </location>
</feature>
<feature type="topological domain" description="Cytoplasmic" evidence="2">
    <location>
        <begin position="103"/>
        <end position="139"/>
    </location>
</feature>
<feature type="transmembrane region" description="Helical" evidence="2">
    <location>
        <begin position="140"/>
        <end position="160"/>
    </location>
</feature>
<feature type="topological domain" description="Extracellular" evidence="2">
    <location>
        <begin position="161"/>
        <end position="164"/>
    </location>
</feature>
<feature type="transmembrane region" description="Helical" evidence="2">
    <location>
        <begin position="165"/>
        <end position="184"/>
    </location>
</feature>
<feature type="topological domain" description="Cytoplasmic" evidence="2">
    <location>
        <begin position="185"/>
        <end position="193"/>
    </location>
</feature>
<feature type="transmembrane region" description="Helical" evidence="2">
    <location>
        <begin position="194"/>
        <end position="214"/>
    </location>
</feature>
<feature type="topological domain" description="Extracellular" evidence="2">
    <location>
        <begin position="215"/>
        <end position="237"/>
    </location>
</feature>
<feature type="transmembrane region" description="Helical" evidence="2">
    <location>
        <begin position="238"/>
        <end position="256"/>
    </location>
</feature>
<feature type="topological domain" description="Cytoplasmic" evidence="2">
    <location>
        <begin position="257"/>
        <end position="284"/>
    </location>
</feature>
<feature type="transmembrane region" description="Helical" evidence="2">
    <location>
        <begin position="285"/>
        <end position="304"/>
    </location>
</feature>
<feature type="topological domain" description="Extracellular" evidence="2">
    <location>
        <begin position="305"/>
        <end position="346"/>
    </location>
</feature>
<feature type="transmembrane region" description="Helical" evidence="2">
    <location>
        <begin position="347"/>
        <end position="366"/>
    </location>
</feature>
<feature type="topological domain" description="Cytoplasmic" evidence="2">
    <location>
        <begin position="367"/>
        <end position="397"/>
    </location>
</feature>
<feature type="transmembrane region" description="Helical" evidence="2">
    <location>
        <begin position="398"/>
        <end position="415"/>
    </location>
</feature>
<feature type="topological domain" description="Extracellular" evidence="2">
    <location>
        <begin position="416"/>
        <end position="426"/>
    </location>
</feature>
<feature type="transmembrane region" description="Helical" evidence="2">
    <location>
        <begin position="427"/>
        <end position="447"/>
    </location>
</feature>
<feature type="topological domain" description="Cytoplasmic" evidence="2">
    <location>
        <begin position="448"/>
        <end position="463"/>
    </location>
</feature>
<feature type="transmembrane region" description="Helical" evidence="2">
    <location>
        <begin position="464"/>
        <end position="485"/>
    </location>
</feature>
<feature type="topological domain" description="Extracellular" evidence="2">
    <location>
        <begin position="486"/>
        <end position="493"/>
    </location>
</feature>
<feature type="transmembrane region" description="Helical" evidence="2">
    <location>
        <begin position="494"/>
        <end position="513"/>
    </location>
</feature>
<feature type="topological domain" description="Cytoplasmic" evidence="2">
    <location>
        <begin position="514"/>
        <end position="548"/>
    </location>
</feature>
<feature type="region of interest" description="Disordered" evidence="3">
    <location>
        <begin position="1"/>
        <end position="38"/>
    </location>
</feature>
<feature type="compositionally biased region" description="Polar residues" evidence="3">
    <location>
        <begin position="1"/>
        <end position="12"/>
    </location>
</feature>
<feature type="glycosylation site" description="N-linked (GlcNAc...) asparagine" evidence="2">
    <location>
        <position position="321"/>
    </location>
</feature>
<feature type="glycosylation site" description="N-linked (GlcNAc...) asparagine" evidence="2">
    <location>
        <position position="335"/>
    </location>
</feature>
<feature type="sequence conflict" description="In Ref. 3; CAA84395." evidence="4" ref="3">
    <original>D</original>
    <variation>Y</variation>
    <location>
        <position position="146"/>
    </location>
</feature>
<feature type="sequence conflict" description="In Ref. 2; AAD08636." evidence="4" ref="2">
    <original>P</original>
    <variation>L</variation>
    <location>
        <position position="407"/>
    </location>
</feature>
<feature type="sequence conflict" description="In Ref. 2; AAD08636." evidence="4" ref="2">
    <original>DL</original>
    <variation>HV</variation>
    <location>
        <begin position="426"/>
        <end position="427"/>
    </location>
</feature>
<proteinExistence type="evidence at transcript level"/>
<sequence>MSGDTGTPNQGGTRYGSISSPPSPGPQQAPPGGTYLSEKIPIPDTESGAFSLRKLWAFTGPGFLMSIAFLDPGNIESDLQAGAVAGFKLLWVLLWATVLGLLCQRLAARLGVVTGKDLGEVCHLYYPKVPRTLLWLTIELAIVGSDMQEVIGTAIAFSLLSAGRIPLWGGVLITIVDTFFFLFLDNYGLRKLEAFFGFLITIMALTFGYEYVVARPAQGALLQGLFLPSCPGCGQPELLQAVGIVGAIIMPHNIYLHSSLVKSREVDRSRRADIREANMYFLIEATIALSVSFFINLFVMAVFGQAFYKQTNQAAFNICANSSLHDYATIFPRDNLTVAVDIYQGGVILGCLFGPAALYIWAVGLLAAGQSSTMTGTYAGQFVMEGFLKLRWSRFARVLLTRSCAIPPTVLLAVFRDLQDLSGLNDLLNVLQSLLLPFAVLPILTFTSMPALMQEFANGLVSKIITSSIMVLVCAVNLYFVISYVPSLPHPAYFSLVALLAAAYLGLTTYLVWTCLITQGATRLAHSSHQRFLYGLPGEDQEEGRTSG</sequence>
<evidence type="ECO:0000250" key="1">
    <source>
        <dbReference type="UniProtKB" id="P49279"/>
    </source>
</evidence>
<evidence type="ECO:0000255" key="2"/>
<evidence type="ECO:0000256" key="3">
    <source>
        <dbReference type="SAM" id="MobiDB-lite"/>
    </source>
</evidence>
<evidence type="ECO:0000305" key="4"/>
<dbReference type="EMBL" id="AF005380">
    <property type="protein sequence ID" value="AAC28241.1"/>
    <property type="molecule type" value="mRNA"/>
</dbReference>
<dbReference type="EMBL" id="U70255">
    <property type="protein sequence ID" value="AAD08636.1"/>
    <property type="status" value="ALT_INIT"/>
    <property type="molecule type" value="mRNA"/>
</dbReference>
<dbReference type="EMBL" id="Z34916">
    <property type="protein sequence ID" value="CAA84395.1"/>
    <property type="molecule type" value="Genomic_DNA"/>
</dbReference>
<dbReference type="RefSeq" id="NP_001009345.1">
    <property type="nucleotide sequence ID" value="NM_001009345.1"/>
</dbReference>
<dbReference type="SMR" id="P49280"/>
<dbReference type="STRING" id="9940.ENSOARP00000020985"/>
<dbReference type="GlyCosmos" id="P49280">
    <property type="glycosylation" value="2 sites, No reported glycans"/>
</dbReference>
<dbReference type="PaxDb" id="9940-ENSOARP00000020985"/>
<dbReference type="GeneID" id="443365"/>
<dbReference type="KEGG" id="oas:443365"/>
<dbReference type="CTD" id="6556"/>
<dbReference type="eggNOG" id="KOG1291">
    <property type="taxonomic scope" value="Eukaryota"/>
</dbReference>
<dbReference type="OrthoDB" id="409173at2759"/>
<dbReference type="Proteomes" id="UP000002356">
    <property type="component" value="Unplaced"/>
</dbReference>
<dbReference type="GO" id="GO:0031902">
    <property type="term" value="C:late endosome membrane"/>
    <property type="evidence" value="ECO:0007669"/>
    <property type="project" value="UniProtKB-SubCell"/>
</dbReference>
<dbReference type="GO" id="GO:0005765">
    <property type="term" value="C:lysosomal membrane"/>
    <property type="evidence" value="ECO:0007669"/>
    <property type="project" value="UniProtKB-SubCell"/>
</dbReference>
<dbReference type="GO" id="GO:0030670">
    <property type="term" value="C:phagocytic vesicle membrane"/>
    <property type="evidence" value="ECO:0007669"/>
    <property type="project" value="TreeGrafter"/>
</dbReference>
<dbReference type="GO" id="GO:0005886">
    <property type="term" value="C:plasma membrane"/>
    <property type="evidence" value="ECO:0007669"/>
    <property type="project" value="TreeGrafter"/>
</dbReference>
<dbReference type="GO" id="GO:0015086">
    <property type="term" value="F:cadmium ion transmembrane transporter activity"/>
    <property type="evidence" value="ECO:0007669"/>
    <property type="project" value="TreeGrafter"/>
</dbReference>
<dbReference type="GO" id="GO:0005381">
    <property type="term" value="F:iron ion transmembrane transporter activity"/>
    <property type="evidence" value="ECO:0000250"/>
    <property type="project" value="UniProtKB"/>
</dbReference>
<dbReference type="GO" id="GO:0005384">
    <property type="term" value="F:manganese ion transmembrane transporter activity"/>
    <property type="evidence" value="ECO:0000250"/>
    <property type="project" value="UniProtKB"/>
</dbReference>
<dbReference type="GO" id="GO:0051139">
    <property type="term" value="F:metal cation:proton antiporter activity"/>
    <property type="evidence" value="ECO:0000250"/>
    <property type="project" value="UniProtKB"/>
</dbReference>
<dbReference type="GO" id="GO:0006826">
    <property type="term" value="P:iron ion transport"/>
    <property type="evidence" value="ECO:0000250"/>
    <property type="project" value="UniProtKB"/>
</dbReference>
<dbReference type="GO" id="GO:0006828">
    <property type="term" value="P:manganese ion transport"/>
    <property type="evidence" value="ECO:0000250"/>
    <property type="project" value="UniProtKB"/>
</dbReference>
<dbReference type="HAMAP" id="MF_00221">
    <property type="entry name" value="NRAMP"/>
    <property type="match status" value="1"/>
</dbReference>
<dbReference type="InterPro" id="IPR001046">
    <property type="entry name" value="NRAMP_fam"/>
</dbReference>
<dbReference type="NCBIfam" id="TIGR01197">
    <property type="entry name" value="nramp"/>
    <property type="match status" value="1"/>
</dbReference>
<dbReference type="NCBIfam" id="NF037982">
    <property type="entry name" value="Nramp_1"/>
    <property type="match status" value="1"/>
</dbReference>
<dbReference type="PANTHER" id="PTHR11706:SF52">
    <property type="entry name" value="NATURAL RESISTANCE-ASSOCIATED MACROPHAGE PROTEIN 1"/>
    <property type="match status" value="1"/>
</dbReference>
<dbReference type="PANTHER" id="PTHR11706">
    <property type="entry name" value="SOLUTE CARRIER PROTEIN FAMILY 11 MEMBER"/>
    <property type="match status" value="1"/>
</dbReference>
<dbReference type="Pfam" id="PF01566">
    <property type="entry name" value="Nramp"/>
    <property type="match status" value="1"/>
</dbReference>
<dbReference type="PRINTS" id="PR00447">
    <property type="entry name" value="NATRESASSCMP"/>
</dbReference>
<comment type="function">
    <text evidence="1">Macrophage-specific antiporter that fluxes metal ions in either direction against a proton gradient. Localized to late endosomal lysosomal membranes, delivers bivalent cations from the cytosol into these acidic compartments where they may directly affect antimicrobial activity. Involved in iron metabolism and host natural resistance to infection with intracellular parasites. Pathogen resistance involves sequestration of Fe(2+) and Mn(2+), cofactors of both prokaryotic and eukaryotic catalases and superoxide dismutases, not only to protect the macrophage against its own generation of reactive oxygen species, but to deny the cations to the pathogen for synthesis of its protective enzymes.</text>
</comment>
<comment type="catalytic activity">
    <reaction evidence="1">
        <text>Zn(2+)(in) + H(+)(out) = Zn(2+)(out) + H(+)(in)</text>
        <dbReference type="Rhea" id="RHEA:28839"/>
        <dbReference type="ChEBI" id="CHEBI:15378"/>
        <dbReference type="ChEBI" id="CHEBI:29105"/>
    </reaction>
</comment>
<comment type="catalytic activity">
    <reaction evidence="1">
        <text>Fe(2+)(in) + H(+)(out) = Fe(2+)(out) + H(+)(in)</text>
        <dbReference type="Rhea" id="RHEA:29439"/>
        <dbReference type="ChEBI" id="CHEBI:15378"/>
        <dbReference type="ChEBI" id="CHEBI:29033"/>
    </reaction>
</comment>
<comment type="catalytic activity">
    <reaction evidence="1">
        <text>Mn(2+)(in) + H(+)(out) = Mn(2+)(out) + H(+)(in)</text>
        <dbReference type="Rhea" id="RHEA:73063"/>
        <dbReference type="ChEBI" id="CHEBI:15378"/>
        <dbReference type="ChEBI" id="CHEBI:29035"/>
    </reaction>
</comment>
<comment type="subcellular location">
    <subcellularLocation>
        <location evidence="1">Late endosome membrane</location>
        <topology evidence="2">Multi-pass membrane protein</topology>
    </subcellularLocation>
    <subcellularLocation>
        <location evidence="1">Lysosome membrane</location>
        <topology evidence="2">Multi-pass membrane protein</topology>
    </subcellularLocation>
</comment>
<comment type="similarity">
    <text evidence="4">Belongs to the NRAMP family.</text>
</comment>
<comment type="sequence caution" evidence="4">
    <conflict type="erroneous initiation">
        <sequence resource="EMBL-CDS" id="AAD08636"/>
    </conflict>
    <text>Extended N-terminus.</text>
</comment>
<organism>
    <name type="scientific">Ovis aries</name>
    <name type="common">Sheep</name>
    <dbReference type="NCBI Taxonomy" id="9940"/>
    <lineage>
        <taxon>Eukaryota</taxon>
        <taxon>Metazoa</taxon>
        <taxon>Chordata</taxon>
        <taxon>Craniata</taxon>
        <taxon>Vertebrata</taxon>
        <taxon>Euteleostomi</taxon>
        <taxon>Mammalia</taxon>
        <taxon>Eutheria</taxon>
        <taxon>Laurasiatheria</taxon>
        <taxon>Artiodactyla</taxon>
        <taxon>Ruminantia</taxon>
        <taxon>Pecora</taxon>
        <taxon>Bovidae</taxon>
        <taxon>Caprinae</taxon>
        <taxon>Ovis</taxon>
    </lineage>
</organism>
<keyword id="KW-0967">Endosome</keyword>
<keyword id="KW-0325">Glycoprotein</keyword>
<keyword id="KW-0406">Ion transport</keyword>
<keyword id="KW-0408">Iron</keyword>
<keyword id="KW-0410">Iron transport</keyword>
<keyword id="KW-0458">Lysosome</keyword>
<keyword id="KW-0472">Membrane</keyword>
<keyword id="KW-1185">Reference proteome</keyword>
<keyword id="KW-0812">Transmembrane</keyword>
<keyword id="KW-1133">Transmembrane helix</keyword>
<keyword id="KW-0813">Transport</keyword>
<name>NRAM1_SHEEP</name>